<proteinExistence type="inferred from homology"/>
<dbReference type="EC" id="6.3.3.1" evidence="1"/>
<dbReference type="EMBL" id="AP006840">
    <property type="protein sequence ID" value="BAD41838.1"/>
    <property type="molecule type" value="Genomic_DNA"/>
</dbReference>
<dbReference type="RefSeq" id="WP_011196972.1">
    <property type="nucleotide sequence ID" value="NC_006177.1"/>
</dbReference>
<dbReference type="SMR" id="Q67KG0"/>
<dbReference type="STRING" id="292459.STH2853"/>
<dbReference type="KEGG" id="sth:STH2853"/>
<dbReference type="eggNOG" id="COG0150">
    <property type="taxonomic scope" value="Bacteria"/>
</dbReference>
<dbReference type="HOGENOM" id="CLU_047116_0_0_9"/>
<dbReference type="OrthoDB" id="9802507at2"/>
<dbReference type="UniPathway" id="UPA00074">
    <property type="reaction ID" value="UER00129"/>
</dbReference>
<dbReference type="Proteomes" id="UP000000417">
    <property type="component" value="Chromosome"/>
</dbReference>
<dbReference type="GO" id="GO:0005829">
    <property type="term" value="C:cytosol"/>
    <property type="evidence" value="ECO:0007669"/>
    <property type="project" value="TreeGrafter"/>
</dbReference>
<dbReference type="GO" id="GO:0005524">
    <property type="term" value="F:ATP binding"/>
    <property type="evidence" value="ECO:0007669"/>
    <property type="project" value="UniProtKB-KW"/>
</dbReference>
<dbReference type="GO" id="GO:0004637">
    <property type="term" value="F:phosphoribosylamine-glycine ligase activity"/>
    <property type="evidence" value="ECO:0007669"/>
    <property type="project" value="TreeGrafter"/>
</dbReference>
<dbReference type="GO" id="GO:0004641">
    <property type="term" value="F:phosphoribosylformylglycinamidine cyclo-ligase activity"/>
    <property type="evidence" value="ECO:0007669"/>
    <property type="project" value="UniProtKB-UniRule"/>
</dbReference>
<dbReference type="GO" id="GO:0006189">
    <property type="term" value="P:'de novo' IMP biosynthetic process"/>
    <property type="evidence" value="ECO:0007669"/>
    <property type="project" value="UniProtKB-UniRule"/>
</dbReference>
<dbReference type="GO" id="GO:0046084">
    <property type="term" value="P:adenine biosynthetic process"/>
    <property type="evidence" value="ECO:0007669"/>
    <property type="project" value="TreeGrafter"/>
</dbReference>
<dbReference type="CDD" id="cd02196">
    <property type="entry name" value="PurM"/>
    <property type="match status" value="1"/>
</dbReference>
<dbReference type="FunFam" id="3.30.1330.10:FF:000001">
    <property type="entry name" value="Phosphoribosylformylglycinamidine cyclo-ligase"/>
    <property type="match status" value="1"/>
</dbReference>
<dbReference type="FunFam" id="3.90.650.10:FF:000011">
    <property type="entry name" value="Phosphoribosylformylglycinamidine cyclo-ligase"/>
    <property type="match status" value="1"/>
</dbReference>
<dbReference type="Gene3D" id="3.90.650.10">
    <property type="entry name" value="PurM-like C-terminal domain"/>
    <property type="match status" value="1"/>
</dbReference>
<dbReference type="Gene3D" id="3.30.1330.10">
    <property type="entry name" value="PurM-like, N-terminal domain"/>
    <property type="match status" value="1"/>
</dbReference>
<dbReference type="HAMAP" id="MF_00741">
    <property type="entry name" value="AIRS"/>
    <property type="match status" value="1"/>
</dbReference>
<dbReference type="InterPro" id="IPR010918">
    <property type="entry name" value="PurM-like_C_dom"/>
</dbReference>
<dbReference type="InterPro" id="IPR036676">
    <property type="entry name" value="PurM-like_C_sf"/>
</dbReference>
<dbReference type="InterPro" id="IPR016188">
    <property type="entry name" value="PurM-like_N"/>
</dbReference>
<dbReference type="InterPro" id="IPR036921">
    <property type="entry name" value="PurM-like_N_sf"/>
</dbReference>
<dbReference type="InterPro" id="IPR004733">
    <property type="entry name" value="PurM_cligase"/>
</dbReference>
<dbReference type="NCBIfam" id="TIGR00878">
    <property type="entry name" value="purM"/>
    <property type="match status" value="1"/>
</dbReference>
<dbReference type="PANTHER" id="PTHR10520:SF12">
    <property type="entry name" value="TRIFUNCTIONAL PURINE BIOSYNTHETIC PROTEIN ADENOSINE-3"/>
    <property type="match status" value="1"/>
</dbReference>
<dbReference type="PANTHER" id="PTHR10520">
    <property type="entry name" value="TRIFUNCTIONAL PURINE BIOSYNTHETIC PROTEIN ADENOSINE-3-RELATED"/>
    <property type="match status" value="1"/>
</dbReference>
<dbReference type="Pfam" id="PF00586">
    <property type="entry name" value="AIRS"/>
    <property type="match status" value="1"/>
</dbReference>
<dbReference type="Pfam" id="PF02769">
    <property type="entry name" value="AIRS_C"/>
    <property type="match status" value="1"/>
</dbReference>
<dbReference type="SUPFAM" id="SSF56042">
    <property type="entry name" value="PurM C-terminal domain-like"/>
    <property type="match status" value="1"/>
</dbReference>
<dbReference type="SUPFAM" id="SSF55326">
    <property type="entry name" value="PurM N-terminal domain-like"/>
    <property type="match status" value="1"/>
</dbReference>
<name>PUR5_SYMTH</name>
<reference key="1">
    <citation type="journal article" date="2004" name="Nucleic Acids Res.">
        <title>Genome sequence of Symbiobacterium thermophilum, an uncultivable bacterium that depends on microbial commensalism.</title>
        <authorList>
            <person name="Ueda K."/>
            <person name="Yamashita A."/>
            <person name="Ishikawa J."/>
            <person name="Shimada M."/>
            <person name="Watsuji T."/>
            <person name="Morimura K."/>
            <person name="Ikeda H."/>
            <person name="Hattori M."/>
            <person name="Beppu T."/>
        </authorList>
    </citation>
    <scope>NUCLEOTIDE SEQUENCE [LARGE SCALE GENOMIC DNA]</scope>
    <source>
        <strain>DSM 24528 / JCM 14929 / IAM 14863 / T</strain>
    </source>
</reference>
<sequence length="353" mass="37409">MTEKGLTYADAGVNRERHYELVRRIAAHTARTLRRPGTLGNIGAFGGLFQLDPARYPEPVLVSGTDGVGTKLRLAFLSGRHDTVGIDLVAMSVNDILCQGAEPLFFLDYIGIGQKDLAVLEQVVKGIADGCLQAGCALIGGETAELPGMYPPGEYDLAGFAVGIVNRDRLLTGEKVAPGDALVGLASSGLHANGYSLARRVLLKVDGGAFDLDDRPPELGGRTVLEVMLTPTRIYVRTVLRLLARFDVHGIANITGGGLHENIPRMLPEGTAAVLRRGAWKEPPVFDLIRRLGPVAQAEMEATFNLGLGMVLAVPADQAEAVAAAARELGEEAWVVGEVAAAEPGGPRVVVRR</sequence>
<keyword id="KW-0067">ATP-binding</keyword>
<keyword id="KW-0963">Cytoplasm</keyword>
<keyword id="KW-0436">Ligase</keyword>
<keyword id="KW-0547">Nucleotide-binding</keyword>
<keyword id="KW-0658">Purine biosynthesis</keyword>
<keyword id="KW-1185">Reference proteome</keyword>
<evidence type="ECO:0000255" key="1">
    <source>
        <dbReference type="HAMAP-Rule" id="MF_00741"/>
    </source>
</evidence>
<comment type="catalytic activity">
    <reaction evidence="1">
        <text>2-formamido-N(1)-(5-O-phospho-beta-D-ribosyl)acetamidine + ATP = 5-amino-1-(5-phospho-beta-D-ribosyl)imidazole + ADP + phosphate + H(+)</text>
        <dbReference type="Rhea" id="RHEA:23032"/>
        <dbReference type="ChEBI" id="CHEBI:15378"/>
        <dbReference type="ChEBI" id="CHEBI:30616"/>
        <dbReference type="ChEBI" id="CHEBI:43474"/>
        <dbReference type="ChEBI" id="CHEBI:137981"/>
        <dbReference type="ChEBI" id="CHEBI:147287"/>
        <dbReference type="ChEBI" id="CHEBI:456216"/>
        <dbReference type="EC" id="6.3.3.1"/>
    </reaction>
</comment>
<comment type="pathway">
    <text evidence="1">Purine metabolism; IMP biosynthesis via de novo pathway; 5-amino-1-(5-phospho-D-ribosyl)imidazole from N(2)-formyl-N(1)-(5-phospho-D-ribosyl)glycinamide: step 2/2.</text>
</comment>
<comment type="subcellular location">
    <subcellularLocation>
        <location evidence="1">Cytoplasm</location>
    </subcellularLocation>
</comment>
<comment type="similarity">
    <text evidence="1">Belongs to the AIR synthase family.</text>
</comment>
<protein>
    <recommendedName>
        <fullName evidence="1">Phosphoribosylformylglycinamidine cyclo-ligase</fullName>
        <ecNumber evidence="1">6.3.3.1</ecNumber>
    </recommendedName>
    <alternativeName>
        <fullName evidence="1">AIR synthase</fullName>
    </alternativeName>
    <alternativeName>
        <fullName evidence="1">AIRS</fullName>
    </alternativeName>
    <alternativeName>
        <fullName evidence="1">Phosphoribosyl-aminoimidazole synthetase</fullName>
    </alternativeName>
</protein>
<organism>
    <name type="scientific">Symbiobacterium thermophilum (strain DSM 24528 / JCM 14929 / IAM 14863 / T)</name>
    <dbReference type="NCBI Taxonomy" id="292459"/>
    <lineage>
        <taxon>Bacteria</taxon>
        <taxon>Bacillati</taxon>
        <taxon>Bacillota</taxon>
        <taxon>Clostridia</taxon>
        <taxon>Eubacteriales</taxon>
        <taxon>Symbiobacteriaceae</taxon>
        <taxon>Symbiobacterium</taxon>
    </lineage>
</organism>
<feature type="chain" id="PRO_0000258420" description="Phosphoribosylformylglycinamidine cyclo-ligase">
    <location>
        <begin position="1"/>
        <end position="353"/>
    </location>
</feature>
<accession>Q67KG0</accession>
<gene>
    <name evidence="1" type="primary">purM</name>
    <name type="ordered locus">STH2853</name>
</gene>